<keyword id="KW-0066">ATP synthesis</keyword>
<keyword id="KW-0067">ATP-binding</keyword>
<keyword id="KW-0997">Cell inner membrane</keyword>
<keyword id="KW-1003">Cell membrane</keyword>
<keyword id="KW-0139">CF(1)</keyword>
<keyword id="KW-0375">Hydrogen ion transport</keyword>
<keyword id="KW-0406">Ion transport</keyword>
<keyword id="KW-0472">Membrane</keyword>
<keyword id="KW-0547">Nucleotide-binding</keyword>
<keyword id="KW-1278">Translocase</keyword>
<keyword id="KW-0813">Transport</keyword>
<organism>
    <name type="scientific">Rickettsia bellii (strain OSU 85-389)</name>
    <dbReference type="NCBI Taxonomy" id="391896"/>
    <lineage>
        <taxon>Bacteria</taxon>
        <taxon>Pseudomonadati</taxon>
        <taxon>Pseudomonadota</taxon>
        <taxon>Alphaproteobacteria</taxon>
        <taxon>Rickettsiales</taxon>
        <taxon>Rickettsiaceae</taxon>
        <taxon>Rickettsieae</taxon>
        <taxon>Rickettsia</taxon>
        <taxon>belli group</taxon>
    </lineage>
</organism>
<proteinExistence type="inferred from homology"/>
<reference key="1">
    <citation type="submission" date="2007-09" db="EMBL/GenBank/DDBJ databases">
        <title>Complete genome sequencing of Rickettsia bellii.</title>
        <authorList>
            <person name="Madan A."/>
            <person name="Lee H."/>
            <person name="Madan A."/>
            <person name="Yoon J.-G."/>
            <person name="Ryu G.-Y."/>
            <person name="Dasch G."/>
            <person name="Ereemeva M."/>
        </authorList>
    </citation>
    <scope>NUCLEOTIDE SEQUENCE [LARGE SCALE GENOMIC DNA]</scope>
    <source>
        <strain>OSU 85-389</strain>
    </source>
</reference>
<gene>
    <name evidence="1" type="primary">atpD</name>
    <name type="ordered locus">A1I_07460</name>
</gene>
<name>ATPB_RICB8</name>
<protein>
    <recommendedName>
        <fullName evidence="1">ATP synthase subunit beta</fullName>
        <ecNumber evidence="1">7.1.2.2</ecNumber>
    </recommendedName>
    <alternativeName>
        <fullName evidence="1">ATP synthase F1 sector subunit beta</fullName>
    </alternativeName>
    <alternativeName>
        <fullName evidence="1">F-ATPase subunit beta</fullName>
    </alternativeName>
</protein>
<accession>A8GY40</accession>
<feature type="chain" id="PRO_1000055153" description="ATP synthase subunit beta">
    <location>
        <begin position="1"/>
        <end position="473"/>
    </location>
</feature>
<feature type="binding site" evidence="1">
    <location>
        <begin position="153"/>
        <end position="160"/>
    </location>
    <ligand>
        <name>ATP</name>
        <dbReference type="ChEBI" id="CHEBI:30616"/>
    </ligand>
</feature>
<sequence length="473" mass="51125">MKKNIGKITQIISAVVDVKFTNKGKLPQILNALECYNDKQRIVLEIAQHIGDDTVRCIAMNSTEGLVRGMEVVDTGSPISIPVGIETLGRIMNVVGEPIDGKGKIKGSSISSIYKSAPSFTQQSTDRNILVTGIKVVDLLAPYTKGGKIGLFGGAGVGKTVLIMELINNVAKAHGGYTVFAGVGERTREGNDLYHEMIDSGVINLEEPEKSKVALVYGQMNEPPGARARVALTGLTVAESFRDMNEGQDVLFFVDNIFRFTQAGSEVSALLGRIPSAVGYQPTLATDMGELQERITSTKHGSITSVQAIYVPADDLTDPAPATSFAHLDATIVLSRQIAELGIYPAVDPLDSTSQVLDPMIVGEEHYNVARKVQQILQTYKSLQDIIAILGMDELSEEDKLTVSRARKIQRFLSQPFHVAEVFTGAEGKFVNLADTIAGFKGLTEGKYDDLPEAAFYMVGTIEEALEKAKTLK</sequence>
<comment type="function">
    <text evidence="1">Produces ATP from ADP in the presence of a proton gradient across the membrane. The catalytic sites are hosted primarily by the beta subunits.</text>
</comment>
<comment type="catalytic activity">
    <reaction evidence="1">
        <text>ATP + H2O + 4 H(+)(in) = ADP + phosphate + 5 H(+)(out)</text>
        <dbReference type="Rhea" id="RHEA:57720"/>
        <dbReference type="ChEBI" id="CHEBI:15377"/>
        <dbReference type="ChEBI" id="CHEBI:15378"/>
        <dbReference type="ChEBI" id="CHEBI:30616"/>
        <dbReference type="ChEBI" id="CHEBI:43474"/>
        <dbReference type="ChEBI" id="CHEBI:456216"/>
        <dbReference type="EC" id="7.1.2.2"/>
    </reaction>
</comment>
<comment type="subunit">
    <text evidence="1">F-type ATPases have 2 components, CF(1) - the catalytic core - and CF(0) - the membrane proton channel. CF(1) has five subunits: alpha(3), beta(3), gamma(1), delta(1), epsilon(1). CF(0) has three main subunits: a(1), b(2) and c(9-12). The alpha and beta chains form an alternating ring which encloses part of the gamma chain. CF(1) is attached to CF(0) by a central stalk formed by the gamma and epsilon chains, while a peripheral stalk is formed by the delta and b chains.</text>
</comment>
<comment type="subcellular location">
    <subcellularLocation>
        <location evidence="1">Cell inner membrane</location>
        <topology evidence="1">Peripheral membrane protein</topology>
    </subcellularLocation>
</comment>
<comment type="similarity">
    <text evidence="1">Belongs to the ATPase alpha/beta chains family.</text>
</comment>
<evidence type="ECO:0000255" key="1">
    <source>
        <dbReference type="HAMAP-Rule" id="MF_01347"/>
    </source>
</evidence>
<dbReference type="EC" id="7.1.2.2" evidence="1"/>
<dbReference type="EMBL" id="CP000849">
    <property type="protein sequence ID" value="ABV79790.1"/>
    <property type="molecule type" value="Genomic_DNA"/>
</dbReference>
<dbReference type="RefSeq" id="WP_012152256.1">
    <property type="nucleotide sequence ID" value="NC_009883.1"/>
</dbReference>
<dbReference type="SMR" id="A8GY40"/>
<dbReference type="KEGG" id="rbo:A1I_07460"/>
<dbReference type="HOGENOM" id="CLU_022398_0_2_5"/>
<dbReference type="GO" id="GO:0005886">
    <property type="term" value="C:plasma membrane"/>
    <property type="evidence" value="ECO:0007669"/>
    <property type="project" value="UniProtKB-SubCell"/>
</dbReference>
<dbReference type="GO" id="GO:0045259">
    <property type="term" value="C:proton-transporting ATP synthase complex"/>
    <property type="evidence" value="ECO:0007669"/>
    <property type="project" value="UniProtKB-KW"/>
</dbReference>
<dbReference type="GO" id="GO:0005524">
    <property type="term" value="F:ATP binding"/>
    <property type="evidence" value="ECO:0007669"/>
    <property type="project" value="UniProtKB-UniRule"/>
</dbReference>
<dbReference type="GO" id="GO:0016887">
    <property type="term" value="F:ATP hydrolysis activity"/>
    <property type="evidence" value="ECO:0007669"/>
    <property type="project" value="InterPro"/>
</dbReference>
<dbReference type="GO" id="GO:0046933">
    <property type="term" value="F:proton-transporting ATP synthase activity, rotational mechanism"/>
    <property type="evidence" value="ECO:0007669"/>
    <property type="project" value="UniProtKB-UniRule"/>
</dbReference>
<dbReference type="CDD" id="cd18110">
    <property type="entry name" value="ATP-synt_F1_beta_C"/>
    <property type="match status" value="1"/>
</dbReference>
<dbReference type="CDD" id="cd18115">
    <property type="entry name" value="ATP-synt_F1_beta_N"/>
    <property type="match status" value="1"/>
</dbReference>
<dbReference type="CDD" id="cd01133">
    <property type="entry name" value="F1-ATPase_beta_CD"/>
    <property type="match status" value="1"/>
</dbReference>
<dbReference type="FunFam" id="1.10.1140.10:FF:000001">
    <property type="entry name" value="ATP synthase subunit beta"/>
    <property type="match status" value="1"/>
</dbReference>
<dbReference type="FunFam" id="2.40.10.170:FF:000014">
    <property type="entry name" value="ATP synthase subunit beta"/>
    <property type="match status" value="1"/>
</dbReference>
<dbReference type="FunFam" id="3.40.50.300:FF:000026">
    <property type="entry name" value="ATP synthase subunit beta"/>
    <property type="match status" value="1"/>
</dbReference>
<dbReference type="Gene3D" id="2.40.10.170">
    <property type="match status" value="1"/>
</dbReference>
<dbReference type="Gene3D" id="1.10.1140.10">
    <property type="entry name" value="Bovine Mitochondrial F1-atpase, Atp Synthase Beta Chain, Chain D, domain 3"/>
    <property type="match status" value="1"/>
</dbReference>
<dbReference type="Gene3D" id="3.40.50.300">
    <property type="entry name" value="P-loop containing nucleotide triphosphate hydrolases"/>
    <property type="match status" value="1"/>
</dbReference>
<dbReference type="HAMAP" id="MF_01347">
    <property type="entry name" value="ATP_synth_beta_bact"/>
    <property type="match status" value="1"/>
</dbReference>
<dbReference type="InterPro" id="IPR003593">
    <property type="entry name" value="AAA+_ATPase"/>
</dbReference>
<dbReference type="InterPro" id="IPR055190">
    <property type="entry name" value="ATP-synt_VA_C"/>
</dbReference>
<dbReference type="InterPro" id="IPR005722">
    <property type="entry name" value="ATP_synth_F1_bsu"/>
</dbReference>
<dbReference type="InterPro" id="IPR020003">
    <property type="entry name" value="ATPase_a/bsu_AS"/>
</dbReference>
<dbReference type="InterPro" id="IPR050053">
    <property type="entry name" value="ATPase_alpha/beta_chains"/>
</dbReference>
<dbReference type="InterPro" id="IPR004100">
    <property type="entry name" value="ATPase_F1/V1/A1_a/bsu_N"/>
</dbReference>
<dbReference type="InterPro" id="IPR036121">
    <property type="entry name" value="ATPase_F1/V1/A1_a/bsu_N_sf"/>
</dbReference>
<dbReference type="InterPro" id="IPR000194">
    <property type="entry name" value="ATPase_F1/V1/A1_a/bsu_nucl-bd"/>
</dbReference>
<dbReference type="InterPro" id="IPR024034">
    <property type="entry name" value="ATPase_F1/V1_b/a_C"/>
</dbReference>
<dbReference type="InterPro" id="IPR027417">
    <property type="entry name" value="P-loop_NTPase"/>
</dbReference>
<dbReference type="NCBIfam" id="TIGR01039">
    <property type="entry name" value="atpD"/>
    <property type="match status" value="1"/>
</dbReference>
<dbReference type="PANTHER" id="PTHR15184">
    <property type="entry name" value="ATP SYNTHASE"/>
    <property type="match status" value="1"/>
</dbReference>
<dbReference type="PANTHER" id="PTHR15184:SF71">
    <property type="entry name" value="ATP SYNTHASE SUBUNIT BETA, MITOCHONDRIAL"/>
    <property type="match status" value="1"/>
</dbReference>
<dbReference type="Pfam" id="PF00006">
    <property type="entry name" value="ATP-synt_ab"/>
    <property type="match status" value="1"/>
</dbReference>
<dbReference type="Pfam" id="PF02874">
    <property type="entry name" value="ATP-synt_ab_N"/>
    <property type="match status" value="1"/>
</dbReference>
<dbReference type="Pfam" id="PF22919">
    <property type="entry name" value="ATP-synt_VA_C"/>
    <property type="match status" value="1"/>
</dbReference>
<dbReference type="PIRSF" id="PIRSF039072">
    <property type="entry name" value="ATPase_subunit_beta"/>
    <property type="match status" value="1"/>
</dbReference>
<dbReference type="SMART" id="SM00382">
    <property type="entry name" value="AAA"/>
    <property type="match status" value="1"/>
</dbReference>
<dbReference type="SUPFAM" id="SSF47917">
    <property type="entry name" value="C-terminal domain of alpha and beta subunits of F1 ATP synthase"/>
    <property type="match status" value="1"/>
</dbReference>
<dbReference type="SUPFAM" id="SSF50615">
    <property type="entry name" value="N-terminal domain of alpha and beta subunits of F1 ATP synthase"/>
    <property type="match status" value="1"/>
</dbReference>
<dbReference type="SUPFAM" id="SSF52540">
    <property type="entry name" value="P-loop containing nucleoside triphosphate hydrolases"/>
    <property type="match status" value="1"/>
</dbReference>
<dbReference type="PROSITE" id="PS00152">
    <property type="entry name" value="ATPASE_ALPHA_BETA"/>
    <property type="match status" value="1"/>
</dbReference>